<accession>C5BV99</accession>
<organism>
    <name type="scientific">Beutenbergia cavernae (strain ATCC BAA-8 / DSM 12333 / CCUG 43141 / JCM 11478 / NBRC 16432 / NCIMB 13614 / HKI 0122)</name>
    <dbReference type="NCBI Taxonomy" id="471853"/>
    <lineage>
        <taxon>Bacteria</taxon>
        <taxon>Bacillati</taxon>
        <taxon>Actinomycetota</taxon>
        <taxon>Actinomycetes</taxon>
        <taxon>Micrococcales</taxon>
        <taxon>Beutenbergiaceae</taxon>
        <taxon>Beutenbergia</taxon>
    </lineage>
</organism>
<dbReference type="EC" id="4.3.2.10" evidence="1"/>
<dbReference type="EMBL" id="CP001618">
    <property type="protein sequence ID" value="ACQ80486.1"/>
    <property type="molecule type" value="Genomic_DNA"/>
</dbReference>
<dbReference type="RefSeq" id="WP_015882726.1">
    <property type="nucleotide sequence ID" value="NC_012669.1"/>
</dbReference>
<dbReference type="SMR" id="C5BV99"/>
<dbReference type="STRING" id="471853.Bcav_2235"/>
<dbReference type="KEGG" id="bcv:Bcav_2235"/>
<dbReference type="eggNOG" id="COG0107">
    <property type="taxonomic scope" value="Bacteria"/>
</dbReference>
<dbReference type="HOGENOM" id="CLU_048577_4_0_11"/>
<dbReference type="OrthoDB" id="9781903at2"/>
<dbReference type="UniPathway" id="UPA00031">
    <property type="reaction ID" value="UER00010"/>
</dbReference>
<dbReference type="Proteomes" id="UP000007962">
    <property type="component" value="Chromosome"/>
</dbReference>
<dbReference type="GO" id="GO:0005737">
    <property type="term" value="C:cytoplasm"/>
    <property type="evidence" value="ECO:0007669"/>
    <property type="project" value="UniProtKB-SubCell"/>
</dbReference>
<dbReference type="GO" id="GO:0000107">
    <property type="term" value="F:imidazoleglycerol-phosphate synthase activity"/>
    <property type="evidence" value="ECO:0007669"/>
    <property type="project" value="UniProtKB-UniRule"/>
</dbReference>
<dbReference type="GO" id="GO:0016829">
    <property type="term" value="F:lyase activity"/>
    <property type="evidence" value="ECO:0007669"/>
    <property type="project" value="UniProtKB-KW"/>
</dbReference>
<dbReference type="GO" id="GO:0000105">
    <property type="term" value="P:L-histidine biosynthetic process"/>
    <property type="evidence" value="ECO:0007669"/>
    <property type="project" value="UniProtKB-UniRule"/>
</dbReference>
<dbReference type="CDD" id="cd04731">
    <property type="entry name" value="HisF"/>
    <property type="match status" value="1"/>
</dbReference>
<dbReference type="Gene3D" id="3.20.20.70">
    <property type="entry name" value="Aldolase class I"/>
    <property type="match status" value="1"/>
</dbReference>
<dbReference type="HAMAP" id="MF_01013">
    <property type="entry name" value="HisF"/>
    <property type="match status" value="1"/>
</dbReference>
<dbReference type="InterPro" id="IPR013785">
    <property type="entry name" value="Aldolase_TIM"/>
</dbReference>
<dbReference type="InterPro" id="IPR006062">
    <property type="entry name" value="His_biosynth"/>
</dbReference>
<dbReference type="InterPro" id="IPR004651">
    <property type="entry name" value="HisF"/>
</dbReference>
<dbReference type="InterPro" id="IPR050064">
    <property type="entry name" value="IGPS_HisA/HisF"/>
</dbReference>
<dbReference type="InterPro" id="IPR011060">
    <property type="entry name" value="RibuloseP-bd_barrel"/>
</dbReference>
<dbReference type="NCBIfam" id="TIGR00735">
    <property type="entry name" value="hisF"/>
    <property type="match status" value="1"/>
</dbReference>
<dbReference type="PANTHER" id="PTHR21235:SF2">
    <property type="entry name" value="IMIDAZOLE GLYCEROL PHOSPHATE SYNTHASE HISHF"/>
    <property type="match status" value="1"/>
</dbReference>
<dbReference type="PANTHER" id="PTHR21235">
    <property type="entry name" value="IMIDAZOLE GLYCEROL PHOSPHATE SYNTHASE SUBUNIT HISF/H IGP SYNTHASE SUBUNIT HISF/H"/>
    <property type="match status" value="1"/>
</dbReference>
<dbReference type="Pfam" id="PF00977">
    <property type="entry name" value="His_biosynth"/>
    <property type="match status" value="1"/>
</dbReference>
<dbReference type="SUPFAM" id="SSF51366">
    <property type="entry name" value="Ribulose-phoshate binding barrel"/>
    <property type="match status" value="1"/>
</dbReference>
<keyword id="KW-0028">Amino-acid biosynthesis</keyword>
<keyword id="KW-0963">Cytoplasm</keyword>
<keyword id="KW-0368">Histidine biosynthesis</keyword>
<keyword id="KW-0456">Lyase</keyword>
<keyword id="KW-1185">Reference proteome</keyword>
<proteinExistence type="inferred from homology"/>
<name>HIS6_BEUC1</name>
<protein>
    <recommendedName>
        <fullName evidence="1">Imidazole glycerol phosphate synthase subunit HisF</fullName>
        <ecNumber evidence="1">4.3.2.10</ecNumber>
    </recommendedName>
    <alternativeName>
        <fullName evidence="1">IGP synthase cyclase subunit</fullName>
    </alternativeName>
    <alternativeName>
        <fullName evidence="1">IGP synthase subunit HisF</fullName>
    </alternativeName>
    <alternativeName>
        <fullName evidence="1">ImGP synthase subunit HisF</fullName>
        <shortName evidence="1">IGPS subunit HisF</shortName>
    </alternativeName>
</protein>
<evidence type="ECO:0000255" key="1">
    <source>
        <dbReference type="HAMAP-Rule" id="MF_01013"/>
    </source>
</evidence>
<reference key="1">
    <citation type="journal article" date="2009" name="Stand. Genomic Sci.">
        <title>Complete genome sequence of Beutenbergia cavernae type strain (HKI 0122).</title>
        <authorList>
            <person name="Land M."/>
            <person name="Pukall R."/>
            <person name="Abt B."/>
            <person name="Goker M."/>
            <person name="Rohde M."/>
            <person name="Glavina Del Rio T."/>
            <person name="Tice H."/>
            <person name="Copeland A."/>
            <person name="Cheng J.F."/>
            <person name="Lucas S."/>
            <person name="Chen F."/>
            <person name="Nolan M."/>
            <person name="Bruce D."/>
            <person name="Goodwin L."/>
            <person name="Pitluck S."/>
            <person name="Ivanova N."/>
            <person name="Mavromatis K."/>
            <person name="Ovchinnikova G."/>
            <person name="Pati A."/>
            <person name="Chen A."/>
            <person name="Palaniappan K."/>
            <person name="Hauser L."/>
            <person name="Chang Y.J."/>
            <person name="Jefferies C.C."/>
            <person name="Saunders E."/>
            <person name="Brettin T."/>
            <person name="Detter J.C."/>
            <person name="Han C."/>
            <person name="Chain P."/>
            <person name="Bristow J."/>
            <person name="Eisen J.A."/>
            <person name="Markowitz V."/>
            <person name="Hugenholtz P."/>
            <person name="Kyrpides N.C."/>
            <person name="Klenk H.P."/>
            <person name="Lapidus A."/>
        </authorList>
    </citation>
    <scope>NUCLEOTIDE SEQUENCE [LARGE SCALE GENOMIC DNA]</scope>
    <source>
        <strain>ATCC BAA-8 / DSM 12333 / CCUG 43141 / JCM 11478 / NBRC 16432 / NCIMB 13614 / HKI 0122</strain>
    </source>
</reference>
<sequence>MPVALRVVPCLDVDGGRVVKGVNFLDLRDAGDPVELARRYDADGADEITFLDVSASTQGRATTLEMVSATAEQVFVPLTVGGGVRAVADVEALLRAGADKVGVNTAAIARPELLTEIAQHYGNQVLVLSVDARRCPDGVVTDSGFEVTTHGGRTGTGIDAVEWAAEATSRGAGEVLLNSIDADGTTAGFDVEMIEAVRAVVDTPLVASGGAGTVEDFVAAARAGADAVLAASVFHYGTLTISEVKAALRDAGFEVR</sequence>
<comment type="function">
    <text evidence="1">IGPS catalyzes the conversion of PRFAR and glutamine to IGP, AICAR and glutamate. The HisF subunit catalyzes the cyclization activity that produces IGP and AICAR from PRFAR using the ammonia provided by the HisH subunit.</text>
</comment>
<comment type="catalytic activity">
    <reaction evidence="1">
        <text>5-[(5-phospho-1-deoxy-D-ribulos-1-ylimino)methylamino]-1-(5-phospho-beta-D-ribosyl)imidazole-4-carboxamide + L-glutamine = D-erythro-1-(imidazol-4-yl)glycerol 3-phosphate + 5-amino-1-(5-phospho-beta-D-ribosyl)imidazole-4-carboxamide + L-glutamate + H(+)</text>
        <dbReference type="Rhea" id="RHEA:24793"/>
        <dbReference type="ChEBI" id="CHEBI:15378"/>
        <dbReference type="ChEBI" id="CHEBI:29985"/>
        <dbReference type="ChEBI" id="CHEBI:58278"/>
        <dbReference type="ChEBI" id="CHEBI:58359"/>
        <dbReference type="ChEBI" id="CHEBI:58475"/>
        <dbReference type="ChEBI" id="CHEBI:58525"/>
        <dbReference type="EC" id="4.3.2.10"/>
    </reaction>
</comment>
<comment type="pathway">
    <text evidence="1">Amino-acid biosynthesis; L-histidine biosynthesis; L-histidine from 5-phospho-alpha-D-ribose 1-diphosphate: step 5/9.</text>
</comment>
<comment type="subunit">
    <text evidence="1">Heterodimer of HisH and HisF.</text>
</comment>
<comment type="subcellular location">
    <subcellularLocation>
        <location evidence="1">Cytoplasm</location>
    </subcellularLocation>
</comment>
<comment type="similarity">
    <text evidence="1">Belongs to the HisA/HisF family.</text>
</comment>
<gene>
    <name evidence="1" type="primary">hisF</name>
    <name type="ordered locus">Bcav_2235</name>
</gene>
<feature type="chain" id="PRO_1000213204" description="Imidazole glycerol phosphate synthase subunit HisF">
    <location>
        <begin position="1"/>
        <end position="256"/>
    </location>
</feature>
<feature type="active site" evidence="1">
    <location>
        <position position="12"/>
    </location>
</feature>
<feature type="active site" evidence="1">
    <location>
        <position position="131"/>
    </location>
</feature>